<proteinExistence type="inferred from homology"/>
<keyword id="KW-0028">Amino-acid biosynthesis</keyword>
<keyword id="KW-0963">Cytoplasm</keyword>
<keyword id="KW-0315">Glutamine amidotransferase</keyword>
<keyword id="KW-0368">Histidine biosynthesis</keyword>
<keyword id="KW-0378">Hydrolase</keyword>
<keyword id="KW-0456">Lyase</keyword>
<keyword id="KW-1185">Reference proteome</keyword>
<accession>P57921</accession>
<protein>
    <recommendedName>
        <fullName>Imidazole glycerol phosphate synthase subunit HisH</fullName>
        <ecNumber>4.3.2.10</ecNumber>
    </recommendedName>
    <alternativeName>
        <fullName>IGP synthase glutaminase subunit</fullName>
        <ecNumber>3.5.1.2</ecNumber>
    </alternativeName>
    <alternativeName>
        <fullName>IGP synthase subunit HisH</fullName>
    </alternativeName>
    <alternativeName>
        <fullName>ImGP synthase subunit HisH</fullName>
        <shortName>IGPS subunit HisH</shortName>
    </alternativeName>
</protein>
<name>HIS5_PASMU</name>
<gene>
    <name type="primary">hisH</name>
    <name type="ordered locus">PM1202</name>
</gene>
<evidence type="ECO:0000250" key="1"/>
<organism>
    <name type="scientific">Pasteurella multocida (strain Pm70)</name>
    <dbReference type="NCBI Taxonomy" id="272843"/>
    <lineage>
        <taxon>Bacteria</taxon>
        <taxon>Pseudomonadati</taxon>
        <taxon>Pseudomonadota</taxon>
        <taxon>Gammaproteobacteria</taxon>
        <taxon>Pasteurellales</taxon>
        <taxon>Pasteurellaceae</taxon>
        <taxon>Pasteurella</taxon>
    </lineage>
</organism>
<dbReference type="EC" id="4.3.2.10"/>
<dbReference type="EC" id="3.5.1.2"/>
<dbReference type="EMBL" id="AE004439">
    <property type="protein sequence ID" value="AAK03286.1"/>
    <property type="molecule type" value="Genomic_DNA"/>
</dbReference>
<dbReference type="RefSeq" id="WP_010907069.1">
    <property type="nucleotide sequence ID" value="NC_002663.1"/>
</dbReference>
<dbReference type="SMR" id="P57921"/>
<dbReference type="STRING" id="272843.PM1202"/>
<dbReference type="MEROPS" id="C26.965"/>
<dbReference type="EnsemblBacteria" id="AAK03286">
    <property type="protein sequence ID" value="AAK03286"/>
    <property type="gene ID" value="PM1202"/>
</dbReference>
<dbReference type="KEGG" id="pmu:PM1202"/>
<dbReference type="PATRIC" id="fig|272843.6.peg.1213"/>
<dbReference type="HOGENOM" id="CLU_071837_0_0_6"/>
<dbReference type="OrthoDB" id="9807137at2"/>
<dbReference type="UniPathway" id="UPA00031">
    <property type="reaction ID" value="UER00010"/>
</dbReference>
<dbReference type="Proteomes" id="UP000000809">
    <property type="component" value="Chromosome"/>
</dbReference>
<dbReference type="GO" id="GO:0005737">
    <property type="term" value="C:cytoplasm"/>
    <property type="evidence" value="ECO:0007669"/>
    <property type="project" value="UniProtKB-SubCell"/>
</dbReference>
<dbReference type="GO" id="GO:0004359">
    <property type="term" value="F:glutaminase activity"/>
    <property type="evidence" value="ECO:0007669"/>
    <property type="project" value="UniProtKB-EC"/>
</dbReference>
<dbReference type="GO" id="GO:0000107">
    <property type="term" value="F:imidazoleglycerol-phosphate synthase activity"/>
    <property type="evidence" value="ECO:0007669"/>
    <property type="project" value="UniProtKB-UniRule"/>
</dbReference>
<dbReference type="GO" id="GO:0016829">
    <property type="term" value="F:lyase activity"/>
    <property type="evidence" value="ECO:0007669"/>
    <property type="project" value="UniProtKB-KW"/>
</dbReference>
<dbReference type="GO" id="GO:0000105">
    <property type="term" value="P:L-histidine biosynthetic process"/>
    <property type="evidence" value="ECO:0007669"/>
    <property type="project" value="UniProtKB-UniRule"/>
</dbReference>
<dbReference type="CDD" id="cd01748">
    <property type="entry name" value="GATase1_IGP_Synthase"/>
    <property type="match status" value="1"/>
</dbReference>
<dbReference type="FunFam" id="3.40.50.880:FF:000009">
    <property type="entry name" value="Imidazole glycerol phosphate synthase subunit HisH"/>
    <property type="match status" value="1"/>
</dbReference>
<dbReference type="Gene3D" id="3.40.50.880">
    <property type="match status" value="1"/>
</dbReference>
<dbReference type="HAMAP" id="MF_00278">
    <property type="entry name" value="HisH"/>
    <property type="match status" value="1"/>
</dbReference>
<dbReference type="InterPro" id="IPR029062">
    <property type="entry name" value="Class_I_gatase-like"/>
</dbReference>
<dbReference type="InterPro" id="IPR017926">
    <property type="entry name" value="GATASE"/>
</dbReference>
<dbReference type="InterPro" id="IPR010139">
    <property type="entry name" value="Imidazole-glycPsynth_HisH"/>
</dbReference>
<dbReference type="NCBIfam" id="TIGR01855">
    <property type="entry name" value="IMP_synth_hisH"/>
    <property type="match status" value="1"/>
</dbReference>
<dbReference type="PANTHER" id="PTHR42701">
    <property type="entry name" value="IMIDAZOLE GLYCEROL PHOSPHATE SYNTHASE SUBUNIT HISH"/>
    <property type="match status" value="1"/>
</dbReference>
<dbReference type="PANTHER" id="PTHR42701:SF1">
    <property type="entry name" value="IMIDAZOLE GLYCEROL PHOSPHATE SYNTHASE SUBUNIT HISH"/>
    <property type="match status" value="1"/>
</dbReference>
<dbReference type="Pfam" id="PF00117">
    <property type="entry name" value="GATase"/>
    <property type="match status" value="1"/>
</dbReference>
<dbReference type="PIRSF" id="PIRSF000495">
    <property type="entry name" value="Amidotransf_hisH"/>
    <property type="match status" value="1"/>
</dbReference>
<dbReference type="PRINTS" id="PR00097">
    <property type="entry name" value="ANTSNTHASEII"/>
</dbReference>
<dbReference type="SUPFAM" id="SSF52317">
    <property type="entry name" value="Class I glutamine amidotransferase-like"/>
    <property type="match status" value="1"/>
</dbReference>
<dbReference type="PROSITE" id="PS51273">
    <property type="entry name" value="GATASE_TYPE_1"/>
    <property type="match status" value="1"/>
</dbReference>
<comment type="function">
    <text evidence="1">IGPS catalyzes the conversion of PRFAR and glutamine to IGP, AICAR and glutamate. The HisH subunit catalyzes the hydrolysis of glutamine to glutamate and ammonia as part of the synthesis of IGP and AICAR. The resulting ammonia molecule is channeled to the active site of HisF (By similarity).</text>
</comment>
<comment type="catalytic activity">
    <reaction>
        <text>5-[(5-phospho-1-deoxy-D-ribulos-1-ylimino)methylamino]-1-(5-phospho-beta-D-ribosyl)imidazole-4-carboxamide + L-glutamine = D-erythro-1-(imidazol-4-yl)glycerol 3-phosphate + 5-amino-1-(5-phospho-beta-D-ribosyl)imidazole-4-carboxamide + L-glutamate + H(+)</text>
        <dbReference type="Rhea" id="RHEA:24793"/>
        <dbReference type="ChEBI" id="CHEBI:15378"/>
        <dbReference type="ChEBI" id="CHEBI:29985"/>
        <dbReference type="ChEBI" id="CHEBI:58278"/>
        <dbReference type="ChEBI" id="CHEBI:58359"/>
        <dbReference type="ChEBI" id="CHEBI:58475"/>
        <dbReference type="ChEBI" id="CHEBI:58525"/>
        <dbReference type="EC" id="4.3.2.10"/>
    </reaction>
</comment>
<comment type="catalytic activity">
    <reaction>
        <text>L-glutamine + H2O = L-glutamate + NH4(+)</text>
        <dbReference type="Rhea" id="RHEA:15889"/>
        <dbReference type="ChEBI" id="CHEBI:15377"/>
        <dbReference type="ChEBI" id="CHEBI:28938"/>
        <dbReference type="ChEBI" id="CHEBI:29985"/>
        <dbReference type="ChEBI" id="CHEBI:58359"/>
        <dbReference type="EC" id="3.5.1.2"/>
    </reaction>
</comment>
<comment type="pathway">
    <text>Amino-acid biosynthesis; L-histidine biosynthesis; L-histidine from 5-phospho-alpha-D-ribose 1-diphosphate: step 5/9.</text>
</comment>
<comment type="subunit">
    <text evidence="1">Heterodimer of HisH and HisF.</text>
</comment>
<comment type="subcellular location">
    <subcellularLocation>
        <location evidence="1">Cytoplasm</location>
    </subcellularLocation>
</comment>
<reference key="1">
    <citation type="journal article" date="2001" name="Proc. Natl. Acad. Sci. U.S.A.">
        <title>Complete genomic sequence of Pasteurella multocida Pm70.</title>
        <authorList>
            <person name="May B.J."/>
            <person name="Zhang Q."/>
            <person name="Li L.L."/>
            <person name="Paustian M.L."/>
            <person name="Whittam T.S."/>
            <person name="Kapur V."/>
        </authorList>
    </citation>
    <scope>NUCLEOTIDE SEQUENCE [LARGE SCALE GENOMIC DNA]</scope>
    <source>
        <strain>Pm70</strain>
    </source>
</reference>
<feature type="chain" id="PRO_0000152401" description="Imidazole glycerol phosphate synthase subunit HisH">
    <location>
        <begin position="1"/>
        <end position="198"/>
    </location>
</feature>
<feature type="domain" description="Glutamine amidotransferase type-1">
    <location>
        <begin position="3"/>
        <end position="198"/>
    </location>
</feature>
<feature type="active site" description="Nucleophile" evidence="1">
    <location>
        <position position="78"/>
    </location>
</feature>
<feature type="active site" evidence="1">
    <location>
        <position position="178"/>
    </location>
</feature>
<feature type="active site" evidence="1">
    <location>
        <position position="180"/>
    </location>
</feature>
<sequence>MQNITIINTRCANLSSVKFAFDRLGYHTEITDNIEKIQSADKLILPGVGTAKAAMQNLADLGLIEVIQSLTQPVLGICLGMQLMTDYSEEGNLDLLKLMSGKTEKLPDCQLPLPHMGWNKVHYAADHPLFAEIAQDSYFYFVHSYGVLPNPHTVATCDYGVPFSAVIQHNNFYGAQFHPERSGKAGALFLRNFVENIK</sequence>